<proteinExistence type="evidence at transcript level"/>
<dbReference type="EMBL" id="M58575">
    <property type="protein sequence ID" value="AAA49664.1"/>
    <property type="molecule type" value="mRNA"/>
</dbReference>
<dbReference type="EMBL" id="M58576">
    <property type="protein sequence ID" value="AAA49665.1"/>
    <property type="molecule type" value="mRNA"/>
</dbReference>
<dbReference type="EMBL" id="M60769">
    <property type="protein sequence ID" value="AAA49886.1"/>
    <property type="molecule type" value="mRNA"/>
</dbReference>
<dbReference type="PIR" id="JQ1298">
    <property type="entry name" value="JQ1298"/>
</dbReference>
<dbReference type="SMR" id="P24801"/>
<dbReference type="DNASU" id="397735"/>
<dbReference type="GeneID" id="397735"/>
<dbReference type="KEGG" id="xla:397735"/>
<dbReference type="AGR" id="Xenbase:XB-GENE-945322"/>
<dbReference type="CTD" id="397735"/>
<dbReference type="Xenbase" id="XB-GENE-945322">
    <property type="gene designation" value="anxa2.L"/>
</dbReference>
<dbReference type="OrthoDB" id="37886at2759"/>
<dbReference type="Proteomes" id="UP000186698">
    <property type="component" value="Chromosome 3L"/>
</dbReference>
<dbReference type="Bgee" id="397735">
    <property type="expression patterns" value="Expressed in intestine and 19 other cell types or tissues"/>
</dbReference>
<dbReference type="GO" id="GO:0005604">
    <property type="term" value="C:basement membrane"/>
    <property type="evidence" value="ECO:0007669"/>
    <property type="project" value="UniProtKB-SubCell"/>
</dbReference>
<dbReference type="GO" id="GO:0005737">
    <property type="term" value="C:cytoplasm"/>
    <property type="evidence" value="ECO:0000318"/>
    <property type="project" value="GO_Central"/>
</dbReference>
<dbReference type="GO" id="GO:0005576">
    <property type="term" value="C:extracellular region"/>
    <property type="evidence" value="ECO:0007669"/>
    <property type="project" value="UniProtKB-KW"/>
</dbReference>
<dbReference type="GO" id="GO:0005634">
    <property type="term" value="C:nucleus"/>
    <property type="evidence" value="ECO:0000318"/>
    <property type="project" value="GO_Central"/>
</dbReference>
<dbReference type="GO" id="GO:0005886">
    <property type="term" value="C:plasma membrane"/>
    <property type="evidence" value="ECO:0000318"/>
    <property type="project" value="GO_Central"/>
</dbReference>
<dbReference type="GO" id="GO:0012506">
    <property type="term" value="C:vesicle membrane"/>
    <property type="evidence" value="ECO:0000318"/>
    <property type="project" value="GO_Central"/>
</dbReference>
<dbReference type="GO" id="GO:0005509">
    <property type="term" value="F:calcium ion binding"/>
    <property type="evidence" value="ECO:0007669"/>
    <property type="project" value="InterPro"/>
</dbReference>
<dbReference type="GO" id="GO:0005544">
    <property type="term" value="F:calcium-dependent phospholipid binding"/>
    <property type="evidence" value="ECO:0000318"/>
    <property type="project" value="GO_Central"/>
</dbReference>
<dbReference type="GO" id="GO:0008092">
    <property type="term" value="F:cytoskeletal protein binding"/>
    <property type="evidence" value="ECO:0007669"/>
    <property type="project" value="InterPro"/>
</dbReference>
<dbReference type="GO" id="GO:0001786">
    <property type="term" value="F:phosphatidylserine binding"/>
    <property type="evidence" value="ECO:0000318"/>
    <property type="project" value="GO_Central"/>
</dbReference>
<dbReference type="GO" id="GO:0004859">
    <property type="term" value="F:phospholipase inhibitor activity"/>
    <property type="evidence" value="ECO:0007669"/>
    <property type="project" value="InterPro"/>
</dbReference>
<dbReference type="GO" id="GO:1905602">
    <property type="term" value="P:positive regulation of receptor-mediated endocytosis involved in cholesterol transport"/>
    <property type="evidence" value="ECO:0000318"/>
    <property type="project" value="GO_Central"/>
</dbReference>
<dbReference type="FunFam" id="1.10.220.10:FF:000001">
    <property type="entry name" value="Annexin"/>
    <property type="match status" value="1"/>
</dbReference>
<dbReference type="FunFam" id="1.10.220.10:FF:000002">
    <property type="entry name" value="Annexin"/>
    <property type="match status" value="1"/>
</dbReference>
<dbReference type="FunFam" id="1.10.220.10:FF:000003">
    <property type="entry name" value="Annexin"/>
    <property type="match status" value="1"/>
</dbReference>
<dbReference type="FunFam" id="1.10.220.10:FF:000007">
    <property type="entry name" value="Annexin"/>
    <property type="match status" value="1"/>
</dbReference>
<dbReference type="Gene3D" id="1.10.220.10">
    <property type="entry name" value="Annexin"/>
    <property type="match status" value="4"/>
</dbReference>
<dbReference type="InterPro" id="IPR001464">
    <property type="entry name" value="Annexin"/>
</dbReference>
<dbReference type="InterPro" id="IPR018502">
    <property type="entry name" value="Annexin_repeat"/>
</dbReference>
<dbReference type="InterPro" id="IPR018252">
    <property type="entry name" value="Annexin_repeat_CS"/>
</dbReference>
<dbReference type="InterPro" id="IPR037104">
    <property type="entry name" value="Annexin_sf"/>
</dbReference>
<dbReference type="InterPro" id="IPR002389">
    <property type="entry name" value="ANX2"/>
</dbReference>
<dbReference type="PANTHER" id="PTHR10502">
    <property type="entry name" value="ANNEXIN"/>
    <property type="match status" value="1"/>
</dbReference>
<dbReference type="PANTHER" id="PTHR10502:SF18">
    <property type="entry name" value="ANNEXIN A2-RELATED"/>
    <property type="match status" value="1"/>
</dbReference>
<dbReference type="Pfam" id="PF00191">
    <property type="entry name" value="Annexin"/>
    <property type="match status" value="4"/>
</dbReference>
<dbReference type="PRINTS" id="PR00196">
    <property type="entry name" value="ANNEXIN"/>
</dbReference>
<dbReference type="PRINTS" id="PR00198">
    <property type="entry name" value="ANNEXINII"/>
</dbReference>
<dbReference type="SMART" id="SM00335">
    <property type="entry name" value="ANX"/>
    <property type="match status" value="4"/>
</dbReference>
<dbReference type="SUPFAM" id="SSF47874">
    <property type="entry name" value="Annexin"/>
    <property type="match status" value="1"/>
</dbReference>
<dbReference type="PROSITE" id="PS00223">
    <property type="entry name" value="ANNEXIN_1"/>
    <property type="match status" value="4"/>
</dbReference>
<dbReference type="PROSITE" id="PS51897">
    <property type="entry name" value="ANNEXIN_2"/>
    <property type="match status" value="4"/>
</dbReference>
<evidence type="ECO:0000250" key="1"/>
<evidence type="ECO:0000255" key="2"/>
<evidence type="ECO:0000255" key="3">
    <source>
        <dbReference type="PROSITE-ProRule" id="PRU01245"/>
    </source>
</evidence>
<evidence type="ECO:0000305" key="4"/>
<gene>
    <name type="primary">anxa2-b</name>
</gene>
<reference key="1">
    <citation type="journal article" date="1991" name="J. Biol. Chem.">
        <title>Xenopus annexin II (calpactin I) heavy chain has a distinct amino terminus.</title>
        <authorList>
            <person name="Izant J.G."/>
            <person name="Bryson L.J."/>
        </authorList>
    </citation>
    <scope>NUCLEOTIDE SEQUENCE [MRNA]</scope>
    <source>
        <tissue>Oocyte</tissue>
    </source>
</reference>
<reference key="2">
    <citation type="journal article" date="1991" name="Gene">
        <title>Primary structure and expression of the Xenopus laevis gene encoding annexin II.</title>
        <authorList>
            <person name="Gerke V."/>
            <person name="Koch W."/>
            <person name="Thiel C."/>
        </authorList>
    </citation>
    <scope>NUCLEOTIDE SEQUENCE [MRNA]</scope>
    <source>
        <tissue>Kidney</tissue>
    </source>
</reference>
<sequence length="340" mass="38774">MALIHEILGKLSLEGNQSSSRQSKLGSVKAATHFDAEKDAAAIETAIKTKGVDELTIINILTNRSNEQRQDIAFAFHRRTKKDLPSALKGALSGNLETVMLGLIKTRPQYDASELKASMKGLGTDEDTLIEIICSRTNKELLDIQNAYRELFKTELEKDIMSDTSGDFRKLMVALAKGRRQEDGNMVDYEKIDQDARELYEAGVKRKGTDVTKWITIMTERSHPHLQKVFERYKSYSPYDIEESIKKEVKGDLENAFLNLVQCIQNKPLYFADRLYESMKGKGTKDKILIRIMVSRRNLDMLKIRQEFKKKYGKSLHYFIGQDTKGDYQRALLNLCGGDD</sequence>
<comment type="function">
    <text>Calcium-regulated membrane-binding protein whose affinity for calcium is greatly enhanced by anionic phospholipids. It binds two calcium ions with high affinity.</text>
</comment>
<comment type="subunit">
    <text>Tetramer of 2 light chains (p10 proteins) and 2 heavy chains (p36 proteins).</text>
</comment>
<comment type="subcellular location">
    <subcellularLocation>
        <location>Secreted</location>
        <location>Extracellular space</location>
        <location>Extracellular matrix</location>
        <location>Basement membrane</location>
    </subcellularLocation>
    <text>In the lamina beneath the plasma membrane.</text>
</comment>
<comment type="tissue specificity">
    <text>Adult brain, heart, striated muscle, liver, kidney, and very high levels in skin.</text>
</comment>
<comment type="developmental stage">
    <text>Throughout oogenesis and in mature eggs. Constant levels during early embryogenesis, but decrease at 8h. After midblastula transition, the steady state level increases substantially.</text>
</comment>
<comment type="domain">
    <text>A pair of annexin repeats may form one binding site for calcium and phospholipid.</text>
</comment>
<comment type="miscellaneous">
    <text>It may cross-link plasma membrane phospholipids with actin and the cytoskeleton and be involved with exocytosis.</text>
</comment>
<comment type="similarity">
    <text evidence="3 4">Belongs to the annexin family.</text>
</comment>
<accession>P24801</accession>
<feature type="initiator methionine" description="Removed" evidence="1">
    <location>
        <position position="1"/>
    </location>
</feature>
<feature type="chain" id="PRO_0000067476" description="Annexin A2-B">
    <location>
        <begin position="2"/>
        <end position="340"/>
    </location>
</feature>
<feature type="repeat" description="Annexin 1" evidence="3">
    <location>
        <begin position="34"/>
        <end position="105"/>
    </location>
</feature>
<feature type="repeat" description="Annexin 2" evidence="3">
    <location>
        <begin position="106"/>
        <end position="177"/>
    </location>
</feature>
<feature type="repeat" description="Annexin 3" evidence="3">
    <location>
        <begin position="190"/>
        <end position="262"/>
    </location>
</feature>
<feature type="repeat" description="Annexin 4" evidence="3">
    <location>
        <begin position="266"/>
        <end position="337"/>
    </location>
</feature>
<feature type="region of interest" description="P10 binding site" evidence="2">
    <location>
        <begin position="2"/>
        <end position="25"/>
    </location>
</feature>
<feature type="modified residue" description="Phosphoserine; by PKC" evidence="1">
    <location>
        <position position="27"/>
    </location>
</feature>
<feature type="sequence variant">
    <original>S</original>
    <variation>R</variation>
    <location>
        <position position="244"/>
    </location>
</feature>
<feature type="sequence variant">
    <original>L</original>
    <variation>S</variation>
    <location>
        <position position="258"/>
    </location>
</feature>
<feature type="sequence conflict" description="In Ref. 2; AAA49886." evidence="4" ref="2">
    <original>HP</original>
    <variation>IS</variation>
    <location>
        <begin position="223"/>
        <end position="224"/>
    </location>
</feature>
<feature type="sequence conflict" description="In Ref. 2; AAA49886." evidence="4" ref="2">
    <original>RN</original>
    <variation>CE</variation>
    <location>
        <begin position="297"/>
        <end position="298"/>
    </location>
</feature>
<keyword id="KW-0041">Annexin</keyword>
<keyword id="KW-0084">Basement membrane</keyword>
<keyword id="KW-0106">Calcium</keyword>
<keyword id="KW-0111">Calcium/phospholipid-binding</keyword>
<keyword id="KW-0272">Extracellular matrix</keyword>
<keyword id="KW-0597">Phosphoprotein</keyword>
<keyword id="KW-1185">Reference proteome</keyword>
<keyword id="KW-0677">Repeat</keyword>
<keyword id="KW-0964">Secreted</keyword>
<protein>
    <recommendedName>
        <fullName>Annexin A2-B</fullName>
    </recommendedName>
    <alternativeName>
        <fullName>Annexin II type II</fullName>
    </alternativeName>
    <alternativeName>
        <fullName>Annexin-2-B</fullName>
    </alternativeName>
    <alternativeName>
        <fullName>Calpactin I heavy chain</fullName>
    </alternativeName>
    <alternativeName>
        <fullName>Calpactin-1 heavy chain</fullName>
    </alternativeName>
    <alternativeName>
        <fullName>Lipocortin II</fullName>
    </alternativeName>
</protein>
<organism>
    <name type="scientific">Xenopus laevis</name>
    <name type="common">African clawed frog</name>
    <dbReference type="NCBI Taxonomy" id="8355"/>
    <lineage>
        <taxon>Eukaryota</taxon>
        <taxon>Metazoa</taxon>
        <taxon>Chordata</taxon>
        <taxon>Craniata</taxon>
        <taxon>Vertebrata</taxon>
        <taxon>Euteleostomi</taxon>
        <taxon>Amphibia</taxon>
        <taxon>Batrachia</taxon>
        <taxon>Anura</taxon>
        <taxon>Pipoidea</taxon>
        <taxon>Pipidae</taxon>
        <taxon>Xenopodinae</taxon>
        <taxon>Xenopus</taxon>
        <taxon>Xenopus</taxon>
    </lineage>
</organism>
<name>ANX2B_XENLA</name>